<dbReference type="EC" id="5.4.3.8"/>
<dbReference type="EMBL" id="L12453">
    <property type="protein sequence ID" value="AAA33968.1"/>
    <property type="molecule type" value="mRNA"/>
</dbReference>
<dbReference type="EMBL" id="U20260">
    <property type="protein sequence ID" value="AAC48996.1"/>
    <property type="molecule type" value="Genomic_DNA"/>
</dbReference>
<dbReference type="PIR" id="JQ2263">
    <property type="entry name" value="JQ2263"/>
</dbReference>
<dbReference type="RefSeq" id="NP_001238043.1">
    <property type="nucleotide sequence ID" value="NM_001251114.1"/>
</dbReference>
<dbReference type="SMR" id="P45621"/>
<dbReference type="FunCoup" id="P45621">
    <property type="interactions" value="2401"/>
</dbReference>
<dbReference type="STRING" id="3847.P45621"/>
<dbReference type="PaxDb" id="3847-GLYMA06G00510.1"/>
<dbReference type="ProMEX" id="P45621"/>
<dbReference type="EnsemblPlants" id="KRH51376">
    <property type="protein sequence ID" value="KRH51376"/>
    <property type="gene ID" value="GLYMA_06G002900"/>
</dbReference>
<dbReference type="GeneID" id="547795"/>
<dbReference type="Gramene" id="KRH51376">
    <property type="protein sequence ID" value="KRH51376"/>
    <property type="gene ID" value="GLYMA_06G002900"/>
</dbReference>
<dbReference type="KEGG" id="gmx:547795"/>
<dbReference type="eggNOG" id="KOG1401">
    <property type="taxonomic scope" value="Eukaryota"/>
</dbReference>
<dbReference type="HOGENOM" id="CLU_016922_1_5_1"/>
<dbReference type="InParanoid" id="P45621"/>
<dbReference type="OMA" id="RDICDAN"/>
<dbReference type="OrthoDB" id="425114at2759"/>
<dbReference type="UniPathway" id="UPA00251">
    <property type="reaction ID" value="UER00317"/>
</dbReference>
<dbReference type="UniPathway" id="UPA00668"/>
<dbReference type="Proteomes" id="UP000008827">
    <property type="component" value="Chromosome 6"/>
</dbReference>
<dbReference type="GO" id="GO:0009507">
    <property type="term" value="C:chloroplast"/>
    <property type="evidence" value="ECO:0000318"/>
    <property type="project" value="GO_Central"/>
</dbReference>
<dbReference type="GO" id="GO:0042286">
    <property type="term" value="F:glutamate-1-semialdehyde 2,1-aminomutase activity"/>
    <property type="evidence" value="ECO:0007669"/>
    <property type="project" value="UniProtKB-EC"/>
</dbReference>
<dbReference type="GO" id="GO:0030170">
    <property type="term" value="F:pyridoxal phosphate binding"/>
    <property type="evidence" value="ECO:0007669"/>
    <property type="project" value="InterPro"/>
</dbReference>
<dbReference type="GO" id="GO:0008483">
    <property type="term" value="F:transaminase activity"/>
    <property type="evidence" value="ECO:0007669"/>
    <property type="project" value="InterPro"/>
</dbReference>
<dbReference type="GO" id="GO:0015995">
    <property type="term" value="P:chlorophyll biosynthetic process"/>
    <property type="evidence" value="ECO:0007669"/>
    <property type="project" value="UniProtKB-UniPathway"/>
</dbReference>
<dbReference type="GO" id="GO:0006782">
    <property type="term" value="P:protoporphyrinogen IX biosynthetic process"/>
    <property type="evidence" value="ECO:0007669"/>
    <property type="project" value="UniProtKB-UniPathway"/>
</dbReference>
<dbReference type="CDD" id="cd00610">
    <property type="entry name" value="OAT_like"/>
    <property type="match status" value="1"/>
</dbReference>
<dbReference type="FunFam" id="3.40.640.10:FF:000021">
    <property type="entry name" value="Glutamate-1-semialdehyde 2,1-aminomutase"/>
    <property type="match status" value="1"/>
</dbReference>
<dbReference type="FunFam" id="3.90.1150.10:FF:000012">
    <property type="entry name" value="Glutamate-1-semialdehyde 2,1-aminomutase"/>
    <property type="match status" value="1"/>
</dbReference>
<dbReference type="Gene3D" id="3.90.1150.10">
    <property type="entry name" value="Aspartate Aminotransferase, domain 1"/>
    <property type="match status" value="1"/>
</dbReference>
<dbReference type="Gene3D" id="3.40.640.10">
    <property type="entry name" value="Type I PLP-dependent aspartate aminotransferase-like (Major domain)"/>
    <property type="match status" value="1"/>
</dbReference>
<dbReference type="HAMAP" id="MF_00375">
    <property type="entry name" value="HemL_aminotrans_3"/>
    <property type="match status" value="1"/>
</dbReference>
<dbReference type="InterPro" id="IPR004639">
    <property type="entry name" value="4pyrrol_synth_GluAld_NH2Trfase"/>
</dbReference>
<dbReference type="InterPro" id="IPR005814">
    <property type="entry name" value="Aminotrans_3"/>
</dbReference>
<dbReference type="InterPro" id="IPR049704">
    <property type="entry name" value="Aminotrans_3_PPA_site"/>
</dbReference>
<dbReference type="InterPro" id="IPR015424">
    <property type="entry name" value="PyrdxlP-dep_Trfase"/>
</dbReference>
<dbReference type="InterPro" id="IPR015421">
    <property type="entry name" value="PyrdxlP-dep_Trfase_major"/>
</dbReference>
<dbReference type="InterPro" id="IPR015422">
    <property type="entry name" value="PyrdxlP-dep_Trfase_small"/>
</dbReference>
<dbReference type="NCBIfam" id="TIGR00713">
    <property type="entry name" value="hemL"/>
    <property type="match status" value="1"/>
</dbReference>
<dbReference type="NCBIfam" id="NF000818">
    <property type="entry name" value="PRK00062.1"/>
    <property type="match status" value="1"/>
</dbReference>
<dbReference type="PANTHER" id="PTHR43713">
    <property type="entry name" value="GLUTAMATE-1-SEMIALDEHYDE 2,1-AMINOMUTASE"/>
    <property type="match status" value="1"/>
</dbReference>
<dbReference type="PANTHER" id="PTHR43713:SF3">
    <property type="entry name" value="GLUTAMATE-1-SEMIALDEHYDE 2,1-AMINOMUTASE 1, CHLOROPLASTIC-RELATED"/>
    <property type="match status" value="1"/>
</dbReference>
<dbReference type="Pfam" id="PF00202">
    <property type="entry name" value="Aminotran_3"/>
    <property type="match status" value="1"/>
</dbReference>
<dbReference type="SUPFAM" id="SSF53383">
    <property type="entry name" value="PLP-dependent transferases"/>
    <property type="match status" value="1"/>
</dbReference>
<dbReference type="PROSITE" id="PS00600">
    <property type="entry name" value="AA_TRANSFER_CLASS_3"/>
    <property type="match status" value="1"/>
</dbReference>
<feature type="transit peptide" description="Chloroplast" evidence="2">
    <location>
        <begin position="1"/>
        <end position="28"/>
    </location>
</feature>
<feature type="chain" id="PRO_0000001260" description="Glutamate-1-semialdehyde 2,1-aminomutase, chloroplastic">
    <location>
        <begin position="29"/>
        <end position="466"/>
    </location>
</feature>
<feature type="modified residue" description="N6-(pyridoxal phosphate)lysine" evidence="1">
    <location>
        <position position="306"/>
    </location>
</feature>
<name>GSA_SOYBN</name>
<gene>
    <name type="primary">GSA1</name>
    <name type="synonym">GSA</name>
</gene>
<keyword id="KW-0149">Chlorophyll biosynthesis</keyword>
<keyword id="KW-0150">Chloroplast</keyword>
<keyword id="KW-0413">Isomerase</keyword>
<keyword id="KW-0934">Plastid</keyword>
<keyword id="KW-0627">Porphyrin biosynthesis</keyword>
<keyword id="KW-0663">Pyridoxal phosphate</keyword>
<keyword id="KW-1185">Reference proteome</keyword>
<keyword id="KW-0809">Transit peptide</keyword>
<evidence type="ECO:0000250" key="1"/>
<evidence type="ECO:0000255" key="2"/>
<evidence type="ECO:0000305" key="3"/>
<reference key="1">
    <citation type="journal article" date="1993" name="Plant Physiol.">
        <title>Expression of the soybean (Glycine max) glutamate 1-semialdehyde aminotransferase gene in symbiotic root nodules.</title>
        <authorList>
            <person name="Sangwan I."/>
            <person name="O'Brian M.R."/>
        </authorList>
    </citation>
    <scope>NUCLEOTIDE SEQUENCE [MRNA]</scope>
    <source>
        <tissue>Root nodule</tissue>
    </source>
</reference>
<reference key="2">
    <citation type="journal article" date="1995" name="J. Biol. Chem.">
        <title>gsa1 is a universal tetrapyrrole synthesis gene in soybean and is regulated by a GAGA element.</title>
        <authorList>
            <person name="Frustaci J.M."/>
            <person name="Sangwan I."/>
            <person name="O'Brian M.R."/>
        </authorList>
    </citation>
    <scope>NUCLEOTIDE SEQUENCE [GENOMIC DNA]</scope>
    <source>
        <strain>cv. Essex</strain>
    </source>
</reference>
<proteinExistence type="evidence at transcript level"/>
<comment type="catalytic activity">
    <reaction>
        <text>(S)-4-amino-5-oxopentanoate = 5-aminolevulinate</text>
        <dbReference type="Rhea" id="RHEA:14265"/>
        <dbReference type="ChEBI" id="CHEBI:57501"/>
        <dbReference type="ChEBI" id="CHEBI:356416"/>
        <dbReference type="EC" id="5.4.3.8"/>
    </reaction>
</comment>
<comment type="cofactor">
    <cofactor>
        <name>pyridoxal 5'-phosphate</name>
        <dbReference type="ChEBI" id="CHEBI:597326"/>
    </cofactor>
</comment>
<comment type="pathway">
    <text>Porphyrin-containing compound metabolism; protoporphyrin-IX biosynthesis; 5-aminolevulinate from L-glutamyl-tRNA(Glu): step 2/2.</text>
</comment>
<comment type="pathway">
    <text>Porphyrin-containing compound metabolism; chlorophyll biosynthesis.</text>
</comment>
<comment type="subunit">
    <text evidence="1">Homodimer.</text>
</comment>
<comment type="subcellular location">
    <subcellularLocation>
        <location>Plastid</location>
        <location>Chloroplast</location>
    </subcellularLocation>
</comment>
<comment type="tissue specificity">
    <text>Strongly expressed in leaves of etiolated plantlets independently of light treatment and, to a much lesser extent, in leaves of mature plants.</text>
</comment>
<comment type="similarity">
    <text evidence="3">Belongs to the class-III pyridoxal-phosphate-dependent aminotransferase family. HemL subfamily.</text>
</comment>
<organism>
    <name type="scientific">Glycine max</name>
    <name type="common">Soybean</name>
    <name type="synonym">Glycine hispida</name>
    <dbReference type="NCBI Taxonomy" id="3847"/>
    <lineage>
        <taxon>Eukaryota</taxon>
        <taxon>Viridiplantae</taxon>
        <taxon>Streptophyta</taxon>
        <taxon>Embryophyta</taxon>
        <taxon>Tracheophyta</taxon>
        <taxon>Spermatophyta</taxon>
        <taxon>Magnoliopsida</taxon>
        <taxon>eudicotyledons</taxon>
        <taxon>Gunneridae</taxon>
        <taxon>Pentapetalae</taxon>
        <taxon>rosids</taxon>
        <taxon>fabids</taxon>
        <taxon>Fabales</taxon>
        <taxon>Fabaceae</taxon>
        <taxon>Papilionoideae</taxon>
        <taxon>50 kb inversion clade</taxon>
        <taxon>NPAAA clade</taxon>
        <taxon>indigoferoid/millettioid clade</taxon>
        <taxon>Phaseoleae</taxon>
        <taxon>Glycine</taxon>
        <taxon>Glycine subgen. Soja</taxon>
    </lineage>
</organism>
<protein>
    <recommendedName>
        <fullName>Glutamate-1-semialdehyde 2,1-aminomutase, chloroplastic</fullName>
        <shortName>GSA</shortName>
        <ecNumber>5.4.3.8</ecNumber>
    </recommendedName>
    <alternativeName>
        <fullName>Glutamate-1-semialdehyde aminotransferase</fullName>
        <shortName>GSA-AT</shortName>
    </alternativeName>
</protein>
<accession>P45621</accession>
<sequence>MAVSAITGARLTLGMSLSSSTRSRTVAMAVSIDPKTDNKLTLTKSEEAFAAAKELMPGGVNSPVRAFKSVGGQPIVIDSVKGSRMWDIDGNEYIDYVGSWGPAIIGHADDQVLAALGETMKKGTSFGAPCLLENTLAELVIDAVPSIEMVRFVNSGTEACMGALRLARAYTGREKIIKFEGCYHGHADPFLVKAGSGVATLGLPDSPGVPKAATFETLTAPYNDTEAIEKLFEANKGEIAAVFLEPVVGNAGFIVPKPDFHSFLRKITKENNTLLVFDEVMTGFRLSYGGAQEYFGITPDITTLGKIIGGGLPVGAYGGRRDIMEKVAPAGPMYQAGTLSGNPLAMTAGIETLQRIKEPGTYEYLDKITGELVEGIIEAGKRAGHAICGGHIRGMFGFFFTEGPVYNFADAKKSDTAKFARFFWGMLAEGVYLAPSQFEAGFTSLAHTSDDIKKTIAAAEKVFREI</sequence>